<organism>
    <name type="scientific">Zymomonas mobilis subsp. mobilis (strain ATCC 31821 / ZM4 / CP4)</name>
    <dbReference type="NCBI Taxonomy" id="264203"/>
    <lineage>
        <taxon>Bacteria</taxon>
        <taxon>Pseudomonadati</taxon>
        <taxon>Pseudomonadota</taxon>
        <taxon>Alphaproteobacteria</taxon>
        <taxon>Sphingomonadales</taxon>
        <taxon>Zymomonadaceae</taxon>
        <taxon>Zymomonas</taxon>
    </lineage>
</organism>
<gene>
    <name type="ordered locus">ZMO1566</name>
</gene>
<accession>Q9RH13</accession>
<accession>Q5NM70</accession>
<reference key="1">
    <citation type="submission" date="1998-08" db="EMBL/GenBank/DDBJ databases">
        <title>Sequence analysis of 65G3 cosmid clone of Zymomonas mobilis ZM4 containing rrnA operon.</title>
        <authorList>
            <person name="Lee J.S."/>
            <person name="Kang H.S."/>
        </authorList>
    </citation>
    <scope>NUCLEOTIDE SEQUENCE [GENOMIC DNA]</scope>
    <source>
        <strain>ATCC 31821 / ZM4 / CP4</strain>
    </source>
</reference>
<reference key="2">
    <citation type="journal article" date="2005" name="Nat. Biotechnol.">
        <title>The genome sequence of the ethanologenic bacterium Zymomonas mobilis ZM4.</title>
        <authorList>
            <person name="Seo J.-S."/>
            <person name="Chong H."/>
            <person name="Park H.S."/>
            <person name="Yoon K.-O."/>
            <person name="Jung C."/>
            <person name="Kim J.J."/>
            <person name="Hong J.H."/>
            <person name="Kim H."/>
            <person name="Kim J.-H."/>
            <person name="Kil J.-I."/>
            <person name="Park C.J."/>
            <person name="Oh H.-M."/>
            <person name="Lee J.-S."/>
            <person name="Jin S.-J."/>
            <person name="Um H.-W."/>
            <person name="Lee H.-J."/>
            <person name="Oh S.-J."/>
            <person name="Kim J.Y."/>
            <person name="Kang H.L."/>
            <person name="Lee S.Y."/>
            <person name="Lee K.J."/>
            <person name="Kang H.S."/>
        </authorList>
    </citation>
    <scope>NUCLEOTIDE SEQUENCE [LARGE SCALE GENOMIC DNA]</scope>
    <source>
        <strain>ATCC 31821 / ZM4 / CP4</strain>
    </source>
</reference>
<comment type="subcellular location">
    <subcellularLocation>
        <location evidence="1">Cell inner membrane</location>
        <topology evidence="1">Multi-pass membrane protein</topology>
    </subcellularLocation>
</comment>
<comment type="similarity">
    <text evidence="1">Belongs to the UPF0060 family.</text>
</comment>
<name>Y1566_ZYMMO</name>
<evidence type="ECO:0000255" key="1">
    <source>
        <dbReference type="HAMAP-Rule" id="MF_00010"/>
    </source>
</evidence>
<evidence type="ECO:0000305" key="2"/>
<dbReference type="EMBL" id="AF088897">
    <property type="protein sequence ID" value="AAF18291.1"/>
    <property type="molecule type" value="Genomic_DNA"/>
</dbReference>
<dbReference type="EMBL" id="AE008692">
    <property type="protein sequence ID" value="AAV90190.1"/>
    <property type="molecule type" value="Genomic_DNA"/>
</dbReference>
<dbReference type="RefSeq" id="WP_011241326.1">
    <property type="nucleotide sequence ID" value="NZ_CP035711.1"/>
</dbReference>
<dbReference type="SMR" id="Q9RH13"/>
<dbReference type="KEGG" id="zmo:ZMO1566"/>
<dbReference type="eggNOG" id="COG1742">
    <property type="taxonomic scope" value="Bacteria"/>
</dbReference>
<dbReference type="HOGENOM" id="CLU_117653_1_0_5"/>
<dbReference type="Proteomes" id="UP000001173">
    <property type="component" value="Chromosome"/>
</dbReference>
<dbReference type="GO" id="GO:0005886">
    <property type="term" value="C:plasma membrane"/>
    <property type="evidence" value="ECO:0007669"/>
    <property type="project" value="UniProtKB-SubCell"/>
</dbReference>
<dbReference type="HAMAP" id="MF_00010">
    <property type="entry name" value="UPF0060"/>
    <property type="match status" value="1"/>
</dbReference>
<dbReference type="InterPro" id="IPR003844">
    <property type="entry name" value="UPF0060"/>
</dbReference>
<dbReference type="NCBIfam" id="NF002586">
    <property type="entry name" value="PRK02237.1"/>
    <property type="match status" value="1"/>
</dbReference>
<dbReference type="PANTHER" id="PTHR36116">
    <property type="entry name" value="UPF0060 MEMBRANE PROTEIN YNFA"/>
    <property type="match status" value="1"/>
</dbReference>
<dbReference type="PANTHER" id="PTHR36116:SF1">
    <property type="entry name" value="UPF0060 MEMBRANE PROTEIN YNFA"/>
    <property type="match status" value="1"/>
</dbReference>
<dbReference type="Pfam" id="PF02694">
    <property type="entry name" value="UPF0060"/>
    <property type="match status" value="1"/>
</dbReference>
<dbReference type="SUPFAM" id="SSF103481">
    <property type="entry name" value="Multidrug resistance efflux transporter EmrE"/>
    <property type="match status" value="1"/>
</dbReference>
<sequence length="107" mass="11907">MLALLYIPAALAEITGCFSFWAWIRLHKSPLWLLPGIASLLLFAWLLTFSPAENAGKAYAVYGGIYIIMSLLWSWKVEATPPDHWDLIGAAFCLVGAAIILWMPRSL</sequence>
<feature type="chain" id="PRO_0000162357" description="UPF0060 membrane protein ZMO1566">
    <location>
        <begin position="1"/>
        <end position="107"/>
    </location>
</feature>
<feature type="transmembrane region" description="Helical" evidence="1">
    <location>
        <begin position="4"/>
        <end position="24"/>
    </location>
</feature>
<feature type="transmembrane region" description="Helical" evidence="1">
    <location>
        <begin position="29"/>
        <end position="49"/>
    </location>
</feature>
<feature type="transmembrane region" description="Helical" evidence="1">
    <location>
        <begin position="55"/>
        <end position="75"/>
    </location>
</feature>
<feature type="transmembrane region" description="Helical" evidence="1">
    <location>
        <begin position="84"/>
        <end position="104"/>
    </location>
</feature>
<feature type="sequence conflict" description="In Ref. 1; AAF18291." evidence="2" ref="1">
    <original>D</original>
    <variation>E</variation>
    <location>
        <position position="83"/>
    </location>
</feature>
<protein>
    <recommendedName>
        <fullName evidence="1">UPF0060 membrane protein ZMO1566</fullName>
    </recommendedName>
</protein>
<proteinExistence type="inferred from homology"/>
<keyword id="KW-0997">Cell inner membrane</keyword>
<keyword id="KW-1003">Cell membrane</keyword>
<keyword id="KW-0472">Membrane</keyword>
<keyword id="KW-1185">Reference proteome</keyword>
<keyword id="KW-0812">Transmembrane</keyword>
<keyword id="KW-1133">Transmembrane helix</keyword>